<feature type="chain" id="PRO_0000455707" description="Luciferase">
    <location>
        <begin position="1"/>
        <end position="266"/>
    </location>
</feature>
<feature type="transmembrane region" description="Helical" evidence="2">
    <location>
        <begin position="22"/>
        <end position="41"/>
    </location>
</feature>
<dbReference type="EC" id="1.-.-.-" evidence="3"/>
<dbReference type="EMBL" id="LC435374">
    <property type="protein sequence ID" value="BBH43504.1"/>
    <property type="molecule type" value="mRNA"/>
</dbReference>
<dbReference type="GO" id="GO:0016020">
    <property type="term" value="C:membrane"/>
    <property type="evidence" value="ECO:0007669"/>
    <property type="project" value="UniProtKB-SubCell"/>
</dbReference>
<dbReference type="GO" id="GO:0016491">
    <property type="term" value="F:oxidoreductase activity"/>
    <property type="evidence" value="ECO:0007669"/>
    <property type="project" value="UniProtKB-KW"/>
</dbReference>
<dbReference type="InterPro" id="IPR048273">
    <property type="entry name" value="Luciferase"/>
</dbReference>
<dbReference type="InterPro" id="IPR040841">
    <property type="entry name" value="Luciferase_dom"/>
</dbReference>
<dbReference type="PANTHER" id="PTHR38695">
    <property type="entry name" value="AMINO ACID PERMEASE_ SLC12A DOMAIN-CONTAINING PROTEIN"/>
    <property type="match status" value="1"/>
</dbReference>
<dbReference type="PANTHER" id="PTHR38695:SF1">
    <property type="entry name" value="AMINO ACID PERMEASE_ SLC12A DOMAIN-CONTAINING PROTEIN"/>
    <property type="match status" value="1"/>
</dbReference>
<dbReference type="Pfam" id="PF17648">
    <property type="entry name" value="Luciferase"/>
    <property type="match status" value="1"/>
</dbReference>
<accession>A0A3G9JTR4</accession>
<sequence length="266" mass="29939">MSFFDSVKLDLVGRLFGIRNRGLAVTCCAVAVASIIAFPYIRRDYQTFLSGGPSYAPQNIRGYLIVCVLALFRQEQKGLAIYDRLPEKRRWLPDLPPRDGPRPITTSHIIQRQRNQAPDLKFALEELKATVIPRVQARHTDLTHLSLSKFEFHAEAIFLLPSVPIDDPKNVPSHDTVRRTKREIAHMHDYHDYTLHLALAAQDGKEVVSKGWGQRHPLAGPGVPGPPTEWTFIYAPRNEEELAVVEMIIEASIGYMTNDPAGKTIA</sequence>
<organism>
    <name type="scientific">Armillaria mellea</name>
    <name type="common">Honey mushroom</name>
    <name type="synonym">Agaricus melleus</name>
    <dbReference type="NCBI Taxonomy" id="47429"/>
    <lineage>
        <taxon>Eukaryota</taxon>
        <taxon>Fungi</taxon>
        <taxon>Dikarya</taxon>
        <taxon>Basidiomycota</taxon>
        <taxon>Agaricomycotina</taxon>
        <taxon>Agaricomycetes</taxon>
        <taxon>Agaricomycetidae</taxon>
        <taxon>Agaricales</taxon>
        <taxon>Marasmiineae</taxon>
        <taxon>Physalacriaceae</taxon>
        <taxon>Armillaria</taxon>
    </lineage>
</organism>
<gene>
    <name evidence="4" type="primary">luz</name>
</gene>
<evidence type="ECO:0000250" key="1">
    <source>
        <dbReference type="UniProtKB" id="A0A3G9JYH7"/>
    </source>
</evidence>
<evidence type="ECO:0000255" key="2"/>
<evidence type="ECO:0000269" key="3">
    <source>
    </source>
</evidence>
<evidence type="ECO:0000303" key="4">
    <source>
    </source>
</evidence>
<evidence type="ECO:0000305" key="5"/>
<evidence type="ECO:0000305" key="6">
    <source>
    </source>
</evidence>
<comment type="function">
    <text evidence="1 3 6">Luciferase; part of the gene cluster that mediates the fungal bioluminescence cycle (PubMed:30478037). Uses the fungal luciferin 3-hydroxyhispidin as a substrate to produce an endoperoxide as a high-energy intermediate with decomposition that yields oxyluciferin (also known as caffeoylpyruvate) and light emission (By similarity). The fungal bioluminescence cycle begins with the hispidin synthetase that catalyzes the formation of hispidin which is further hydroxylated by the hispidin-3-hydroxylase, yielding the fungal luciferin 3-hydroxyhispidin. The luciferase then produces an endoperoxide as a high-energy intermediate with decomposition that yields oxyluciferin and light emission. Oxyluciferin can be recycled to caffeic acid by caffeoylpyruvate hydrolase (Probable) (PubMed:30478037).</text>
</comment>
<comment type="catalytic activity">
    <reaction evidence="1">
        <text>3-hydroxyhispidin + O2 = (E)-caffeoylpyruvate + hnu + CO2</text>
        <dbReference type="Rhea" id="RHEA:71143"/>
        <dbReference type="ChEBI" id="CHEBI:15379"/>
        <dbReference type="ChEBI" id="CHEBI:16526"/>
        <dbReference type="ChEBI" id="CHEBI:30212"/>
        <dbReference type="ChEBI" id="CHEBI:190289"/>
        <dbReference type="ChEBI" id="CHEBI:190290"/>
    </reaction>
    <physiologicalReaction direction="left-to-right" evidence="1">
        <dbReference type="Rhea" id="RHEA:71144"/>
    </physiologicalReaction>
</comment>
<comment type="catalytic activity">
    <reaction evidence="1">
        <text>3-hydroxyhispidin + O2 = 4-[(E)-2-(3,4-dihydroxyphenyl)ethenyl]-1,7-dihydroxy-2,3,5-trioxabicyclo[2.2.2]oct-7-en-6-one</text>
        <dbReference type="Rhea" id="RHEA:71147"/>
        <dbReference type="ChEBI" id="CHEBI:15379"/>
        <dbReference type="ChEBI" id="CHEBI:190289"/>
        <dbReference type="ChEBI" id="CHEBI:190291"/>
    </reaction>
    <physiologicalReaction direction="left-to-right" evidence="1">
        <dbReference type="Rhea" id="RHEA:71148"/>
    </physiologicalReaction>
</comment>
<comment type="subcellular location">
    <subcellularLocation>
        <location evidence="1">Membrane</location>
        <topology evidence="2">Single-pass membrane protein</topology>
    </subcellularLocation>
</comment>
<comment type="biotechnology">
    <text evidence="3">The availability of a complete eukaryotic luciferin biosynthesis pathway provides several applications in biomedicine and bioengineering.</text>
</comment>
<comment type="similarity">
    <text evidence="5">Belongs to the fungal luciferase family.</text>
</comment>
<proteinExistence type="evidence at protein level"/>
<reference key="1">
    <citation type="journal article" date="2018" name="Proc. Natl. Acad. Sci. U.S.A.">
        <title>Genetically encodable bioluminescent system from fungi.</title>
        <authorList>
            <person name="Kotlobay A.A."/>
            <person name="Sarkisyan K.S."/>
            <person name="Mokrushina Y.A."/>
            <person name="Marcet-Houben M."/>
            <person name="Serebrovskaya E.O."/>
            <person name="Markina N.M."/>
            <person name="Gonzalez Somermeyer L."/>
            <person name="Gorokhovatsky A.Y."/>
            <person name="Vvedensky A."/>
            <person name="Purtov K.V."/>
            <person name="Petushkov V.N."/>
            <person name="Rodionova N.S."/>
            <person name="Chepurnyh T.V."/>
            <person name="Fakhranurova L.I."/>
            <person name="Guglya E.B."/>
            <person name="Ziganshin R."/>
            <person name="Tsarkova A.S."/>
            <person name="Kaskova Z.M."/>
            <person name="Shender V."/>
            <person name="Abakumov M."/>
            <person name="Abakumova T.O."/>
            <person name="Povolotskaya I.S."/>
            <person name="Eroshkin F.M."/>
            <person name="Zaraisky A.G."/>
            <person name="Mishin A.S."/>
            <person name="Dolgov S.V."/>
            <person name="Mitiouchkina T.Y."/>
            <person name="Kopantzev E.P."/>
            <person name="Waldenmaier H.E."/>
            <person name="Oliveira A.G."/>
            <person name="Oba Y."/>
            <person name="Barsova E."/>
            <person name="Bogdanova E.A."/>
            <person name="Gabaldon T."/>
            <person name="Stevani C.V."/>
            <person name="Lukyanov S."/>
            <person name="Smirnov I.V."/>
            <person name="Gitelson J.I."/>
            <person name="Kondrashov F.A."/>
            <person name="Yampolsky I.V."/>
        </authorList>
    </citation>
    <scope>NUCLEOTIDE SEQUENCE [MRNA]</scope>
    <scope>IDENTIFICATION</scope>
    <scope>FUNCTION</scope>
    <scope>BIOTECHNOLOGY</scope>
</reference>
<name>LUZ_ARMME</name>
<keyword id="KW-0472">Membrane</keyword>
<keyword id="KW-0560">Oxidoreductase</keyword>
<keyword id="KW-0812">Transmembrane</keyword>
<keyword id="KW-1133">Transmembrane helix</keyword>
<protein>
    <recommendedName>
        <fullName evidence="4">Luciferase</fullName>
        <ecNumber evidence="3">1.-.-.-</ecNumber>
    </recommendedName>
    <alternativeName>
        <fullName evidence="4">Fungal bioluminescence cycle protein luz</fullName>
    </alternativeName>
</protein>